<accession>Q8U1E4</accession>
<organism>
    <name type="scientific">Pyrococcus furiosus (strain ATCC 43587 / DSM 3638 / JCM 8422 / Vc1)</name>
    <dbReference type="NCBI Taxonomy" id="186497"/>
    <lineage>
        <taxon>Archaea</taxon>
        <taxon>Methanobacteriati</taxon>
        <taxon>Methanobacteriota</taxon>
        <taxon>Thermococci</taxon>
        <taxon>Thermococcales</taxon>
        <taxon>Thermococcaceae</taxon>
        <taxon>Pyrococcus</taxon>
    </lineage>
</organism>
<gene>
    <name evidence="1" type="primary">eif5a</name>
    <name type="ordered locus">PF1264</name>
</gene>
<protein>
    <recommendedName>
        <fullName evidence="1">Translation initiation factor 5A</fullName>
    </recommendedName>
    <alternativeName>
        <fullName evidence="1">Hypusine-containing protein</fullName>
    </alternativeName>
    <alternativeName>
        <fullName evidence="1">eIF-5A</fullName>
    </alternativeName>
</protein>
<name>IF5A_PYRFU</name>
<proteinExistence type="inferred from homology"/>
<comment type="function">
    <text evidence="1">Functions by promoting the formation of the first peptide bond.</text>
</comment>
<comment type="subcellular location">
    <subcellularLocation>
        <location evidence="1">Cytoplasm</location>
    </subcellularLocation>
</comment>
<comment type="similarity">
    <text evidence="1">Belongs to the eIF-5A family.</text>
</comment>
<feature type="chain" id="PRO_0000142500" description="Translation initiation factor 5A">
    <location>
        <begin position="1"/>
        <end position="138"/>
    </location>
</feature>
<feature type="modified residue" description="Hypusine" evidence="1">
    <location>
        <position position="37"/>
    </location>
</feature>
<dbReference type="EMBL" id="AE009950">
    <property type="protein sequence ID" value="AAL81388.1"/>
    <property type="molecule type" value="Genomic_DNA"/>
</dbReference>
<dbReference type="RefSeq" id="WP_011012408.1">
    <property type="nucleotide sequence ID" value="NZ_CP023154.1"/>
</dbReference>
<dbReference type="SMR" id="Q8U1E4"/>
<dbReference type="IntAct" id="Q8U1E4">
    <property type="interactions" value="1"/>
</dbReference>
<dbReference type="STRING" id="186497.PF1264"/>
<dbReference type="PaxDb" id="186497-PF1264"/>
<dbReference type="KEGG" id="pfu:PF1264"/>
<dbReference type="PATRIC" id="fig|186497.12.peg.1326"/>
<dbReference type="eggNOG" id="arCOG04277">
    <property type="taxonomic scope" value="Archaea"/>
</dbReference>
<dbReference type="HOGENOM" id="CLU_102600_3_0_2"/>
<dbReference type="OrthoDB" id="23689at2157"/>
<dbReference type="PhylomeDB" id="Q8U1E4"/>
<dbReference type="Proteomes" id="UP000001013">
    <property type="component" value="Chromosome"/>
</dbReference>
<dbReference type="GO" id="GO:0005737">
    <property type="term" value="C:cytoplasm"/>
    <property type="evidence" value="ECO:0007669"/>
    <property type="project" value="UniProtKB-SubCell"/>
</dbReference>
<dbReference type="GO" id="GO:0043022">
    <property type="term" value="F:ribosome binding"/>
    <property type="evidence" value="ECO:0007669"/>
    <property type="project" value="InterPro"/>
</dbReference>
<dbReference type="GO" id="GO:0003723">
    <property type="term" value="F:RNA binding"/>
    <property type="evidence" value="ECO:0007669"/>
    <property type="project" value="InterPro"/>
</dbReference>
<dbReference type="GO" id="GO:0003746">
    <property type="term" value="F:translation elongation factor activity"/>
    <property type="evidence" value="ECO:0007669"/>
    <property type="project" value="InterPro"/>
</dbReference>
<dbReference type="GO" id="GO:0003743">
    <property type="term" value="F:translation initiation factor activity"/>
    <property type="evidence" value="ECO:0007669"/>
    <property type="project" value="UniProtKB-UniRule"/>
</dbReference>
<dbReference type="GO" id="GO:0045901">
    <property type="term" value="P:positive regulation of translational elongation"/>
    <property type="evidence" value="ECO:0007669"/>
    <property type="project" value="InterPro"/>
</dbReference>
<dbReference type="GO" id="GO:0045905">
    <property type="term" value="P:positive regulation of translational termination"/>
    <property type="evidence" value="ECO:0007669"/>
    <property type="project" value="InterPro"/>
</dbReference>
<dbReference type="CDD" id="cd04467">
    <property type="entry name" value="S1_aIF5A"/>
    <property type="match status" value="1"/>
</dbReference>
<dbReference type="FunFam" id="2.30.30.30:FF:000038">
    <property type="entry name" value="Translation initiation factor 5A"/>
    <property type="match status" value="1"/>
</dbReference>
<dbReference type="FunFam" id="2.40.50.140:FF:000334">
    <property type="entry name" value="Translation initiation factor 5A"/>
    <property type="match status" value="1"/>
</dbReference>
<dbReference type="Gene3D" id="2.30.30.30">
    <property type="match status" value="1"/>
</dbReference>
<dbReference type="Gene3D" id="2.40.50.140">
    <property type="entry name" value="Nucleic acid-binding proteins"/>
    <property type="match status" value="1"/>
</dbReference>
<dbReference type="HAMAP" id="MF_00085">
    <property type="entry name" value="eIF_5A"/>
    <property type="match status" value="1"/>
</dbReference>
<dbReference type="InterPro" id="IPR001884">
    <property type="entry name" value="IF5A-like"/>
</dbReference>
<dbReference type="InterPro" id="IPR048670">
    <property type="entry name" value="IF5A-like_N"/>
</dbReference>
<dbReference type="InterPro" id="IPR012340">
    <property type="entry name" value="NA-bd_OB-fold"/>
</dbReference>
<dbReference type="InterPro" id="IPR014722">
    <property type="entry name" value="Rib_uL2_dom2"/>
</dbReference>
<dbReference type="InterPro" id="IPR019769">
    <property type="entry name" value="Trans_elong_IF5A_hypusine_site"/>
</dbReference>
<dbReference type="InterPro" id="IPR022847">
    <property type="entry name" value="Transl_elong_IF5A_arc"/>
</dbReference>
<dbReference type="InterPro" id="IPR020189">
    <property type="entry name" value="Transl_elong_IF5A_C"/>
</dbReference>
<dbReference type="InterPro" id="IPR008991">
    <property type="entry name" value="Translation_prot_SH3-like_sf"/>
</dbReference>
<dbReference type="NCBIfam" id="TIGR00037">
    <property type="entry name" value="eIF_5A"/>
    <property type="match status" value="1"/>
</dbReference>
<dbReference type="NCBIfam" id="NF003076">
    <property type="entry name" value="PRK03999.1"/>
    <property type="match status" value="1"/>
</dbReference>
<dbReference type="PANTHER" id="PTHR11673">
    <property type="entry name" value="TRANSLATION INITIATION FACTOR 5A FAMILY MEMBER"/>
    <property type="match status" value="1"/>
</dbReference>
<dbReference type="Pfam" id="PF01287">
    <property type="entry name" value="eIF-5a"/>
    <property type="match status" value="1"/>
</dbReference>
<dbReference type="Pfam" id="PF21485">
    <property type="entry name" value="IF5A-like_N"/>
    <property type="match status" value="1"/>
</dbReference>
<dbReference type="PIRSF" id="PIRSF003025">
    <property type="entry name" value="eIF5A"/>
    <property type="match status" value="1"/>
</dbReference>
<dbReference type="SMART" id="SM01376">
    <property type="entry name" value="eIF-5a"/>
    <property type="match status" value="1"/>
</dbReference>
<dbReference type="SUPFAM" id="SSF50249">
    <property type="entry name" value="Nucleic acid-binding proteins"/>
    <property type="match status" value="1"/>
</dbReference>
<dbReference type="SUPFAM" id="SSF50104">
    <property type="entry name" value="Translation proteins SH3-like domain"/>
    <property type="match status" value="1"/>
</dbReference>
<dbReference type="PROSITE" id="PS00302">
    <property type="entry name" value="IF5A_HYPUSINE"/>
    <property type="match status" value="1"/>
</dbReference>
<evidence type="ECO:0000255" key="1">
    <source>
        <dbReference type="HAMAP-Rule" id="MF_00085"/>
    </source>
</evidence>
<keyword id="KW-0963">Cytoplasm</keyword>
<keyword id="KW-0385">Hypusine</keyword>
<keyword id="KW-0396">Initiation factor</keyword>
<keyword id="KW-0648">Protein biosynthesis</keyword>
<keyword id="KW-1185">Reference proteome</keyword>
<reference key="1">
    <citation type="journal article" date="1999" name="Genetics">
        <title>Divergence of the hyperthermophilic archaea Pyrococcus furiosus and P. horikoshii inferred from complete genomic sequences.</title>
        <authorList>
            <person name="Maeder D.L."/>
            <person name="Weiss R.B."/>
            <person name="Dunn D.M."/>
            <person name="Cherry J.L."/>
            <person name="Gonzalez J.M."/>
            <person name="DiRuggiero J."/>
            <person name="Robb F.T."/>
        </authorList>
    </citation>
    <scope>NUCLEOTIDE SEQUENCE [LARGE SCALE GENOMIC DNA]</scope>
    <source>
        <strain>ATCC 43587 / DSM 3638 / JCM 8422 / Vc1</strain>
    </source>
</reference>
<sequence>MGDKTKVQVSKLKPGRYIIIDDEPCRIVNITVSSPGKHGSAKARIEAVGIFDGKVRSIVKPTSAEVDVPIIDKRTAQVIAVTPDTVQIMDMETYEMFEVPLDTGVEEEIKDKIKEGINVEYWETLGRIKIMRIKGEEE</sequence>